<gene>
    <name evidence="10" type="primary">EHD1</name>
    <name evidence="12" type="ordered locus">At3g20290</name>
    <name evidence="14" type="ORF">MQC12.3</name>
</gene>
<feature type="chain" id="PRO_0000431805" description="EH domain-containing protein 1">
    <location>
        <begin position="1"/>
        <end position="545"/>
    </location>
</feature>
<feature type="domain" description="EF-hand 1" evidence="5">
    <location>
        <begin position="14"/>
        <end position="49"/>
    </location>
</feature>
<feature type="domain" description="EH" evidence="4">
    <location>
        <begin position="15"/>
        <end position="93"/>
    </location>
</feature>
<feature type="domain" description="EF-hand 2" evidence="5">
    <location>
        <begin position="50"/>
        <end position="83"/>
    </location>
</feature>
<feature type="domain" description="Dynamin-type G" evidence="7">
    <location>
        <begin position="194"/>
        <end position="429"/>
    </location>
</feature>
<feature type="region of interest" description="G1 motif" evidence="7">
    <location>
        <begin position="204"/>
        <end position="211"/>
    </location>
</feature>
<feature type="region of interest" description="G2 motif" evidence="7">
    <location>
        <begin position="230"/>
        <end position="231"/>
    </location>
</feature>
<feature type="region of interest" description="G3 motif" evidence="7">
    <location>
        <begin position="292"/>
        <end position="295"/>
    </location>
</feature>
<feature type="region of interest" description="G4 motif" evidence="7">
    <location>
        <begin position="358"/>
        <end position="361"/>
    </location>
</feature>
<feature type="region of interest" description="G5 motif" evidence="7">
    <location>
        <position position="382"/>
    </location>
</feature>
<feature type="coiled-coil region" evidence="3">
    <location>
        <begin position="467"/>
        <end position="490"/>
    </location>
</feature>
<feature type="binding site" evidence="11">
    <location>
        <position position="27"/>
    </location>
    <ligand>
        <name>Ca(2+)</name>
        <dbReference type="ChEBI" id="CHEBI:29108"/>
        <label>1</label>
    </ligand>
</feature>
<feature type="binding site" evidence="11">
    <location>
        <position position="29"/>
    </location>
    <ligand>
        <name>Ca(2+)</name>
        <dbReference type="ChEBI" id="CHEBI:29108"/>
        <label>1</label>
    </ligand>
</feature>
<feature type="binding site" evidence="11">
    <location>
        <position position="31"/>
    </location>
    <ligand>
        <name>Ca(2+)</name>
        <dbReference type="ChEBI" id="CHEBI:29108"/>
        <label>1</label>
    </ligand>
</feature>
<feature type="binding site" evidence="11">
    <location>
        <position position="33"/>
    </location>
    <ligand>
        <name>Ca(2+)</name>
        <dbReference type="ChEBI" id="CHEBI:29108"/>
        <label>1</label>
    </ligand>
</feature>
<feature type="binding site" evidence="11">
    <location>
        <position position="38"/>
    </location>
    <ligand>
        <name>Ca(2+)</name>
        <dbReference type="ChEBI" id="CHEBI:29108"/>
        <label>1</label>
    </ligand>
</feature>
<feature type="binding site" evidence="11">
    <location>
        <position position="61"/>
    </location>
    <ligand>
        <name>Ca(2+)</name>
        <dbReference type="ChEBI" id="CHEBI:29108"/>
        <label>2</label>
    </ligand>
</feature>
<feature type="binding site" evidence="11">
    <location>
        <position position="67"/>
    </location>
    <ligand>
        <name>Ca(2+)</name>
        <dbReference type="ChEBI" id="CHEBI:29108"/>
        <label>2</label>
    </ligand>
</feature>
<feature type="binding site" evidence="11">
    <location>
        <position position="72"/>
    </location>
    <ligand>
        <name>Ca(2+)</name>
        <dbReference type="ChEBI" id="CHEBI:29108"/>
        <label>2</label>
    </ligand>
</feature>
<feature type="binding site" evidence="6">
    <location>
        <begin position="204"/>
        <end position="211"/>
    </location>
    <ligand>
        <name>GTP</name>
        <dbReference type="ChEBI" id="CHEBI:37565"/>
    </ligand>
</feature>
<feature type="binding site" evidence="6">
    <location>
        <begin position="309"/>
        <end position="313"/>
    </location>
    <ligand>
        <name>GTP</name>
        <dbReference type="ChEBI" id="CHEBI:37565"/>
    </ligand>
</feature>
<feature type="binding site" evidence="1">
    <location>
        <position position="359"/>
    </location>
    <ligand>
        <name>GTP</name>
        <dbReference type="ChEBI" id="CHEBI:37565"/>
    </ligand>
</feature>
<feature type="binding site" evidence="6">
    <location>
        <begin position="395"/>
        <end position="398"/>
    </location>
    <ligand>
        <name>GTP</name>
        <dbReference type="ChEBI" id="CHEBI:37565"/>
    </ligand>
</feature>
<feature type="mutagenesis site" description="Impaired endosomal subcellular location and delayed internalization." evidence="9">
    <location>
        <begin position="1"/>
        <end position="93"/>
    </location>
</feature>
<dbReference type="EC" id="3.6.5.2" evidence="6"/>
<dbReference type="EMBL" id="AB024036">
    <property type="protein sequence ID" value="BAB02809.1"/>
    <property type="status" value="ALT_SEQ"/>
    <property type="molecule type" value="Genomic_DNA"/>
</dbReference>
<dbReference type="EMBL" id="CP002686">
    <property type="protein sequence ID" value="AEE76359.1"/>
    <property type="molecule type" value="Genomic_DNA"/>
</dbReference>
<dbReference type="EMBL" id="CP002686">
    <property type="protein sequence ID" value="AEE76360.1"/>
    <property type="molecule type" value="Genomic_DNA"/>
</dbReference>
<dbReference type="EMBL" id="CP002686">
    <property type="protein sequence ID" value="ANM65913.1"/>
    <property type="molecule type" value="Genomic_DNA"/>
</dbReference>
<dbReference type="EMBL" id="AY034911">
    <property type="protein sequence ID" value="AAK59418.1"/>
    <property type="molecule type" value="mRNA"/>
</dbReference>
<dbReference type="EMBL" id="BT004414">
    <property type="protein sequence ID" value="AAO42408.1"/>
    <property type="molecule type" value="mRNA"/>
</dbReference>
<dbReference type="EMBL" id="AK317308">
    <property type="protein sequence ID" value="BAH19984.1"/>
    <property type="molecule type" value="mRNA"/>
</dbReference>
<dbReference type="RefSeq" id="NP_001030731.1">
    <property type="nucleotide sequence ID" value="NM_001035654.2"/>
</dbReference>
<dbReference type="RefSeq" id="NP_001327849.1">
    <property type="nucleotide sequence ID" value="NM_001338474.1"/>
</dbReference>
<dbReference type="RefSeq" id="NP_566657.1">
    <property type="nucleotide sequence ID" value="NM_112920.4"/>
</dbReference>
<dbReference type="SMR" id="Q94CF0"/>
<dbReference type="FunCoup" id="Q94CF0">
    <property type="interactions" value="3317"/>
</dbReference>
<dbReference type="IntAct" id="Q94CF0">
    <property type="interactions" value="1"/>
</dbReference>
<dbReference type="STRING" id="3702.Q94CF0"/>
<dbReference type="PaxDb" id="3702-AT3G20290.1"/>
<dbReference type="ProteomicsDB" id="221936"/>
<dbReference type="EnsemblPlants" id="AT3G20290.1">
    <property type="protein sequence ID" value="AT3G20290.1"/>
    <property type="gene ID" value="AT3G20290"/>
</dbReference>
<dbReference type="EnsemblPlants" id="AT3G20290.2">
    <property type="protein sequence ID" value="AT3G20290.2"/>
    <property type="gene ID" value="AT3G20290"/>
</dbReference>
<dbReference type="EnsemblPlants" id="AT3G20290.3">
    <property type="protein sequence ID" value="AT3G20290.3"/>
    <property type="gene ID" value="AT3G20290"/>
</dbReference>
<dbReference type="GeneID" id="821573"/>
<dbReference type="Gramene" id="AT3G20290.1">
    <property type="protein sequence ID" value="AT3G20290.1"/>
    <property type="gene ID" value="AT3G20290"/>
</dbReference>
<dbReference type="Gramene" id="AT3G20290.2">
    <property type="protein sequence ID" value="AT3G20290.2"/>
    <property type="gene ID" value="AT3G20290"/>
</dbReference>
<dbReference type="Gramene" id="AT3G20290.3">
    <property type="protein sequence ID" value="AT3G20290.3"/>
    <property type="gene ID" value="AT3G20290"/>
</dbReference>
<dbReference type="KEGG" id="ath:AT3G20290"/>
<dbReference type="Araport" id="AT3G20290"/>
<dbReference type="TAIR" id="AT3G20290">
    <property type="gene designation" value="EHD1"/>
</dbReference>
<dbReference type="eggNOG" id="KOG1954">
    <property type="taxonomic scope" value="Eukaryota"/>
</dbReference>
<dbReference type="HOGENOM" id="CLU_017595_2_0_1"/>
<dbReference type="InParanoid" id="Q94CF0"/>
<dbReference type="OMA" id="LMIGQYS"/>
<dbReference type="PhylomeDB" id="Q94CF0"/>
<dbReference type="PRO" id="PR:Q94CF0"/>
<dbReference type="Proteomes" id="UP000006548">
    <property type="component" value="Chromosome 3"/>
</dbReference>
<dbReference type="ExpressionAtlas" id="Q94CF0">
    <property type="expression patterns" value="baseline and differential"/>
</dbReference>
<dbReference type="GO" id="GO:0005737">
    <property type="term" value="C:cytoplasm"/>
    <property type="evidence" value="ECO:0000314"/>
    <property type="project" value="TAIR"/>
</dbReference>
<dbReference type="GO" id="GO:0005768">
    <property type="term" value="C:endosome"/>
    <property type="evidence" value="ECO:0000314"/>
    <property type="project" value="TAIR"/>
</dbReference>
<dbReference type="GO" id="GO:0010008">
    <property type="term" value="C:endosome membrane"/>
    <property type="evidence" value="ECO:0007669"/>
    <property type="project" value="UniProtKB-SubCell"/>
</dbReference>
<dbReference type="GO" id="GO:0043231">
    <property type="term" value="C:intracellular membrane-bounded organelle"/>
    <property type="evidence" value="ECO:0000314"/>
    <property type="project" value="TAIR"/>
</dbReference>
<dbReference type="GO" id="GO:0016020">
    <property type="term" value="C:membrane"/>
    <property type="evidence" value="ECO:0000314"/>
    <property type="project" value="TAIR"/>
</dbReference>
<dbReference type="GO" id="GO:0005886">
    <property type="term" value="C:plasma membrane"/>
    <property type="evidence" value="ECO:0007669"/>
    <property type="project" value="UniProtKB-SubCell"/>
</dbReference>
<dbReference type="GO" id="GO:0009506">
    <property type="term" value="C:plasmodesma"/>
    <property type="evidence" value="ECO:0007005"/>
    <property type="project" value="TAIR"/>
</dbReference>
<dbReference type="GO" id="GO:0005509">
    <property type="term" value="F:calcium ion binding"/>
    <property type="evidence" value="ECO:0007669"/>
    <property type="project" value="InterPro"/>
</dbReference>
<dbReference type="GO" id="GO:0003925">
    <property type="term" value="F:G protein activity"/>
    <property type="evidence" value="ECO:0007669"/>
    <property type="project" value="UniProtKB-EC"/>
</dbReference>
<dbReference type="GO" id="GO:0005525">
    <property type="term" value="F:GTP binding"/>
    <property type="evidence" value="ECO:0007669"/>
    <property type="project" value="UniProtKB-KW"/>
</dbReference>
<dbReference type="GO" id="GO:0032456">
    <property type="term" value="P:endocytic recycling"/>
    <property type="evidence" value="ECO:0000315"/>
    <property type="project" value="TAIR"/>
</dbReference>
<dbReference type="GO" id="GO:0006897">
    <property type="term" value="P:endocytosis"/>
    <property type="evidence" value="ECO:0000315"/>
    <property type="project" value="TAIR"/>
</dbReference>
<dbReference type="GO" id="GO:0042538">
    <property type="term" value="P:hyperosmotic salinity response"/>
    <property type="evidence" value="ECO:0000315"/>
    <property type="project" value="TAIR"/>
</dbReference>
<dbReference type="GO" id="GO:0051260">
    <property type="term" value="P:protein homooligomerization"/>
    <property type="evidence" value="ECO:0000314"/>
    <property type="project" value="UniProtKB"/>
</dbReference>
<dbReference type="CDD" id="cd00052">
    <property type="entry name" value="EH"/>
    <property type="match status" value="1"/>
</dbReference>
<dbReference type="CDD" id="cd09913">
    <property type="entry name" value="EHD"/>
    <property type="match status" value="1"/>
</dbReference>
<dbReference type="FunFam" id="1.10.238.10:FF:000683">
    <property type="entry name" value="EH domain-containing protein 1"/>
    <property type="match status" value="1"/>
</dbReference>
<dbReference type="FunFam" id="3.40.50.300:FF:000147">
    <property type="entry name" value="EH domain-containing protein 1"/>
    <property type="match status" value="1"/>
</dbReference>
<dbReference type="Gene3D" id="1.10.268.20">
    <property type="match status" value="1"/>
</dbReference>
<dbReference type="Gene3D" id="1.10.238.10">
    <property type="entry name" value="EF-hand"/>
    <property type="match status" value="1"/>
</dbReference>
<dbReference type="Gene3D" id="3.40.50.300">
    <property type="entry name" value="P-loop containing nucleotide triphosphate hydrolases"/>
    <property type="match status" value="1"/>
</dbReference>
<dbReference type="InterPro" id="IPR040990">
    <property type="entry name" value="DUF5600"/>
</dbReference>
<dbReference type="InterPro" id="IPR045063">
    <property type="entry name" value="Dynamin_N"/>
</dbReference>
<dbReference type="InterPro" id="IPR011992">
    <property type="entry name" value="EF-hand-dom_pair"/>
</dbReference>
<dbReference type="InterPro" id="IPR002048">
    <property type="entry name" value="EF_hand_dom"/>
</dbReference>
<dbReference type="InterPro" id="IPR000261">
    <property type="entry name" value="EH_dom"/>
</dbReference>
<dbReference type="InterPro" id="IPR031692">
    <property type="entry name" value="EHD_N"/>
</dbReference>
<dbReference type="InterPro" id="IPR030381">
    <property type="entry name" value="G_DYNAMIN_dom"/>
</dbReference>
<dbReference type="InterPro" id="IPR027417">
    <property type="entry name" value="P-loop_NTPase"/>
</dbReference>
<dbReference type="PANTHER" id="PTHR11216:SF31">
    <property type="entry name" value="AT21416P"/>
    <property type="match status" value="1"/>
</dbReference>
<dbReference type="PANTHER" id="PTHR11216">
    <property type="entry name" value="EH DOMAIN"/>
    <property type="match status" value="1"/>
</dbReference>
<dbReference type="Pfam" id="PF18150">
    <property type="entry name" value="DUF5600"/>
    <property type="match status" value="1"/>
</dbReference>
<dbReference type="Pfam" id="PF00350">
    <property type="entry name" value="Dynamin_N"/>
    <property type="match status" value="1"/>
</dbReference>
<dbReference type="Pfam" id="PF12763">
    <property type="entry name" value="EH"/>
    <property type="match status" value="1"/>
</dbReference>
<dbReference type="Pfam" id="PF16880">
    <property type="entry name" value="EHD_N"/>
    <property type="match status" value="1"/>
</dbReference>
<dbReference type="SMART" id="SM00054">
    <property type="entry name" value="EFh"/>
    <property type="match status" value="2"/>
</dbReference>
<dbReference type="SMART" id="SM00027">
    <property type="entry name" value="EH"/>
    <property type="match status" value="1"/>
</dbReference>
<dbReference type="SUPFAM" id="SSF47473">
    <property type="entry name" value="EF-hand"/>
    <property type="match status" value="1"/>
</dbReference>
<dbReference type="SUPFAM" id="SSF52540">
    <property type="entry name" value="P-loop containing nucleoside triphosphate hydrolases"/>
    <property type="match status" value="1"/>
</dbReference>
<dbReference type="PROSITE" id="PS50222">
    <property type="entry name" value="EF_HAND_2"/>
    <property type="match status" value="2"/>
</dbReference>
<dbReference type="PROSITE" id="PS50031">
    <property type="entry name" value="EH"/>
    <property type="match status" value="1"/>
</dbReference>
<dbReference type="PROSITE" id="PS51718">
    <property type="entry name" value="G_DYNAMIN_2"/>
    <property type="match status" value="1"/>
</dbReference>
<evidence type="ECO:0000250" key="1">
    <source>
        <dbReference type="UniProtKB" id="Q8BH64"/>
    </source>
</evidence>
<evidence type="ECO:0000250" key="2">
    <source>
        <dbReference type="UniProtKB" id="Q9WVK4"/>
    </source>
</evidence>
<evidence type="ECO:0000255" key="3"/>
<evidence type="ECO:0000255" key="4">
    <source>
        <dbReference type="PROSITE-ProRule" id="PRU00077"/>
    </source>
</evidence>
<evidence type="ECO:0000255" key="5">
    <source>
        <dbReference type="PROSITE-ProRule" id="PRU00448"/>
    </source>
</evidence>
<evidence type="ECO:0000255" key="6">
    <source>
        <dbReference type="PROSITE-ProRule" id="PRU00758"/>
    </source>
</evidence>
<evidence type="ECO:0000255" key="7">
    <source>
        <dbReference type="PROSITE-ProRule" id="PRU01055"/>
    </source>
</evidence>
<evidence type="ECO:0000269" key="8">
    <source>
    </source>
</evidence>
<evidence type="ECO:0000269" key="9">
    <source>
    </source>
</evidence>
<evidence type="ECO:0000303" key="10">
    <source>
    </source>
</evidence>
<evidence type="ECO:0000305" key="11"/>
<evidence type="ECO:0000312" key="12">
    <source>
        <dbReference type="Araport" id="AT3G20290"/>
    </source>
</evidence>
<evidence type="ECO:0000312" key="13">
    <source>
        <dbReference type="EMBL" id="AAK59418.1"/>
    </source>
</evidence>
<evidence type="ECO:0000312" key="14">
    <source>
        <dbReference type="EMBL" id="BAB02809.1"/>
    </source>
</evidence>
<evidence type="ECO:0000312" key="15">
    <source>
        <dbReference type="EMBL" id="BAH19984.1"/>
    </source>
</evidence>
<comment type="function">
    <text evidence="8 9">Involved in endocytosis positive regulation. Acts in early endocytic membrane fusion and membrane trafficking of recycling endosomes (PubMed:18547399, PubMed:23342166). Confers salt tolerance (PubMed:23342166).</text>
</comment>
<comment type="catalytic activity">
    <reaction evidence="6">
        <text>GTP + H2O = GDP + phosphate + H(+)</text>
        <dbReference type="Rhea" id="RHEA:19669"/>
        <dbReference type="ChEBI" id="CHEBI:15377"/>
        <dbReference type="ChEBI" id="CHEBI:15378"/>
        <dbReference type="ChEBI" id="CHEBI:37565"/>
        <dbReference type="ChEBI" id="CHEBI:43474"/>
        <dbReference type="ChEBI" id="CHEBI:58189"/>
        <dbReference type="EC" id="3.6.5.2"/>
    </reaction>
</comment>
<comment type="subunit">
    <text evidence="8">Homooligomer, and heterooligomer with EHD2.</text>
</comment>
<comment type="subcellular location">
    <subcellularLocation>
        <location evidence="8 9">Endosome membrane</location>
        <topology evidence="8">Peripheral membrane protein</topology>
    </subcellularLocation>
    <subcellularLocation>
        <location evidence="8">Cell membrane</location>
        <topology evidence="8">Peripheral membrane protein</topology>
        <orientation evidence="2">Cytoplasmic side</orientation>
    </subcellularLocation>
    <subcellularLocation>
        <location>Cytoplasm</location>
    </subcellularLocation>
</comment>
<comment type="induction">
    <text evidence="9">By salinity stress.</text>
</comment>
<comment type="domain">
    <text evidence="9">The EH domain (1-93) is critical for vesicular localization.</text>
</comment>
<comment type="disruption phenotype">
    <text evidence="8 9">Early flowering in short-day growth conditions (PubMed:18547399). Slightly slower endocytosis with delayed internalization (PubMed:18547399, PubMed:23342166). Reduced Brefeldin A sensitivity (PubMed:23342166).</text>
</comment>
<comment type="similarity">
    <text evidence="7">Belongs to the TRAFAC class dynamin-like GTPase superfamily. Dynamin/Fzo/YdjA family. EHD subfamily.</text>
</comment>
<comment type="sequence caution" evidence="11">
    <conflict type="erroneous gene model prediction">
        <sequence resource="EMBL-CDS" id="BAB02809"/>
    </conflict>
</comment>
<name>EHD1_ARATH</name>
<proteinExistence type="evidence at protein level"/>
<keyword id="KW-0106">Calcium</keyword>
<keyword id="KW-1003">Cell membrane</keyword>
<keyword id="KW-0175">Coiled coil</keyword>
<keyword id="KW-0963">Cytoplasm</keyword>
<keyword id="KW-0254">Endocytosis</keyword>
<keyword id="KW-0967">Endosome</keyword>
<keyword id="KW-0342">GTP-binding</keyword>
<keyword id="KW-0378">Hydrolase</keyword>
<keyword id="KW-0472">Membrane</keyword>
<keyword id="KW-0479">Metal-binding</keyword>
<keyword id="KW-0547">Nucleotide-binding</keyword>
<keyword id="KW-1185">Reference proteome</keyword>
<keyword id="KW-0677">Repeat</keyword>
<sequence length="545" mass="61230">MEIESVAAGSCSKENQMIYKEWFEFSDSDGDGRITGNDAIKFFTMSNLPRPELKQIWAIADSKRQGYLGFKEFIVAMQLVSLAQTGHEISHEVLISDVDFKNINPPTMEGLGVLMAKKKHSSKSSDPNMNGSPAADTSLTAHWFSSKSSKKISLSSVTSIVDGLKRLYIQKLKPLEVAYRFNDFVSPLLTNSDFDAKPMVMLLGQYSTGKTTFIKHLLKSTYPGAHIGPEPTTDRFVVVMSGPDERSIPGNTVAVQADMPFSGLTTFGTAFLSKFECSQMPHPLLEHVTFVDTPGVLSGEKQRTQRAYDFTGVTSWFASKCDLILLLFDPHKLDVSDEFKRVISSLRGHDDKIRVVLNKADQVDTQQLMRVYGALMWSLGKVLNTPEVSRVYIGSFSDKPINEAATGPIGRELFEKEQDDLLADLKDIPKKACDRRINEFVKRARAAKIHAYIISHLKKEMPAIMGKAKAQQKLIDNLEDEFGKVQREHHLPKGDFPNVDHFREVLSGYNIDKFEKLKPKMLQTVDDMLGYDIPELLKNFKNPYD</sequence>
<accession>Q94CF0</accession>
<accession>Q9LTR4</accession>
<reference key="1">
    <citation type="journal article" date="2000" name="DNA Res.">
        <title>Structural analysis of Arabidopsis thaliana chromosome 3. I. Sequence features of the regions of 4,504,864 bp covered by sixty P1 and TAC clones.</title>
        <authorList>
            <person name="Sato S."/>
            <person name="Nakamura Y."/>
            <person name="Kaneko T."/>
            <person name="Katoh T."/>
            <person name="Asamizu E."/>
            <person name="Tabata S."/>
        </authorList>
    </citation>
    <scope>NUCLEOTIDE SEQUENCE [LARGE SCALE GENOMIC DNA]</scope>
    <source>
        <strain>cv. Columbia</strain>
    </source>
</reference>
<reference key="2">
    <citation type="journal article" date="2017" name="Plant J.">
        <title>Araport11: a complete reannotation of the Arabidopsis thaliana reference genome.</title>
        <authorList>
            <person name="Cheng C.Y."/>
            <person name="Krishnakumar V."/>
            <person name="Chan A.P."/>
            <person name="Thibaud-Nissen F."/>
            <person name="Schobel S."/>
            <person name="Town C.D."/>
        </authorList>
    </citation>
    <scope>GENOME REANNOTATION</scope>
    <source>
        <strain>cv. Columbia</strain>
    </source>
</reference>
<reference key="3">
    <citation type="journal article" date="2003" name="Science">
        <title>Empirical analysis of transcriptional activity in the Arabidopsis genome.</title>
        <authorList>
            <person name="Yamada K."/>
            <person name="Lim J."/>
            <person name="Dale J.M."/>
            <person name="Chen H."/>
            <person name="Shinn P."/>
            <person name="Palm C.J."/>
            <person name="Southwick A.M."/>
            <person name="Wu H.C."/>
            <person name="Kim C.J."/>
            <person name="Nguyen M."/>
            <person name="Pham P.K."/>
            <person name="Cheuk R.F."/>
            <person name="Karlin-Newmann G."/>
            <person name="Liu S.X."/>
            <person name="Lam B."/>
            <person name="Sakano H."/>
            <person name="Wu T."/>
            <person name="Yu G."/>
            <person name="Miranda M."/>
            <person name="Quach H.L."/>
            <person name="Tripp M."/>
            <person name="Chang C.H."/>
            <person name="Lee J.M."/>
            <person name="Toriumi M.J."/>
            <person name="Chan M.M."/>
            <person name="Tang C.C."/>
            <person name="Onodera C.S."/>
            <person name="Deng J.M."/>
            <person name="Akiyama K."/>
            <person name="Ansari Y."/>
            <person name="Arakawa T."/>
            <person name="Banh J."/>
            <person name="Banno F."/>
            <person name="Bowser L."/>
            <person name="Brooks S.Y."/>
            <person name="Carninci P."/>
            <person name="Chao Q."/>
            <person name="Choy N."/>
            <person name="Enju A."/>
            <person name="Goldsmith A.D."/>
            <person name="Gurjal M."/>
            <person name="Hansen N.F."/>
            <person name="Hayashizaki Y."/>
            <person name="Johnson-Hopson C."/>
            <person name="Hsuan V.W."/>
            <person name="Iida K."/>
            <person name="Karnes M."/>
            <person name="Khan S."/>
            <person name="Koesema E."/>
            <person name="Ishida J."/>
            <person name="Jiang P.X."/>
            <person name="Jones T."/>
            <person name="Kawai J."/>
            <person name="Kamiya A."/>
            <person name="Meyers C."/>
            <person name="Nakajima M."/>
            <person name="Narusaka M."/>
            <person name="Seki M."/>
            <person name="Sakurai T."/>
            <person name="Satou M."/>
            <person name="Tamse R."/>
            <person name="Vaysberg M."/>
            <person name="Wallender E.K."/>
            <person name="Wong C."/>
            <person name="Yamamura Y."/>
            <person name="Yuan S."/>
            <person name="Shinozaki K."/>
            <person name="Davis R.W."/>
            <person name="Theologis A."/>
            <person name="Ecker J.R."/>
        </authorList>
    </citation>
    <scope>NUCLEOTIDE SEQUENCE [LARGE SCALE MRNA]</scope>
    <source>
        <strain>cv. Columbia</strain>
    </source>
</reference>
<reference key="4">
    <citation type="journal article" date="2009" name="DNA Res.">
        <title>Analysis of multiple occurrences of alternative splicing events in Arabidopsis thaliana using novel sequenced full-length cDNAs.</title>
        <authorList>
            <person name="Iida K."/>
            <person name="Fukami-Kobayashi K."/>
            <person name="Toyoda A."/>
            <person name="Sakaki Y."/>
            <person name="Kobayashi M."/>
            <person name="Seki M."/>
            <person name="Shinozaki K."/>
        </authorList>
    </citation>
    <scope>NUCLEOTIDE SEQUENCE [LARGE SCALE MRNA]</scope>
    <source>
        <strain>cv. Columbia</strain>
        <tissue evidence="15">Rosette leaf</tissue>
    </source>
</reference>
<reference key="5">
    <citation type="journal article" date="2008" name="Plant J.">
        <title>AtEHDs, novel Arabidopsis EH-domain-containing proteins involved in endocytosis.</title>
        <authorList>
            <person name="Bar M."/>
            <person name="Aharon M."/>
            <person name="Benjamin S."/>
            <person name="Rotblat B."/>
            <person name="Horowitz M."/>
            <person name="Avni A."/>
        </authorList>
    </citation>
    <scope>FUNCTION</scope>
    <scope>DISRUPTION PHENOTYPE</scope>
    <scope>SUBUNIT</scope>
    <scope>SUBCELLULAR LOCATION</scope>
    <scope>GENE FAMILY</scope>
    <scope>NOMENCLATURE</scope>
    <source>
        <strain>cv. Columbia</strain>
    </source>
</reference>
<reference key="6">
    <citation type="journal article" date="2008" name="Plant Signal. Behav.">
        <title>AtEHDs in endocytosis.</title>
        <authorList>
            <person name="Bar M."/>
            <person name="Benjamin S."/>
            <person name="Horowitz M."/>
            <person name="Avni A."/>
        </authorList>
    </citation>
    <scope>REVIEW</scope>
</reference>
<reference key="7">
    <citation type="journal article" date="2013" name="PLoS ONE">
        <title>EHD1 functions in endosomal recycling and confers salt tolerance.</title>
        <authorList>
            <person name="Bar M."/>
            <person name="Leibman M."/>
            <person name="Schuster S."/>
            <person name="Pitzhadza H."/>
            <person name="Avni A."/>
        </authorList>
    </citation>
    <scope>FUNCTION</scope>
    <scope>DISRUPTION PHENOTYPE</scope>
    <scope>INDUCTION BY SALINITY STRESS</scope>
    <scope>MUTAGENESIS OF 1-MET--VAL-93</scope>
    <scope>SUBCELLULAR LOCATION</scope>
    <scope>DOMAIN EH</scope>
</reference>
<protein>
    <recommendedName>
        <fullName evidence="10">EH domain-containing protein 1</fullName>
        <shortName evidence="10">AtEHD1</shortName>
        <ecNumber evidence="6">3.6.5.2</ecNumber>
    </recommendedName>
</protein>
<organism evidence="13">
    <name type="scientific">Arabidopsis thaliana</name>
    <name type="common">Mouse-ear cress</name>
    <dbReference type="NCBI Taxonomy" id="3702"/>
    <lineage>
        <taxon>Eukaryota</taxon>
        <taxon>Viridiplantae</taxon>
        <taxon>Streptophyta</taxon>
        <taxon>Embryophyta</taxon>
        <taxon>Tracheophyta</taxon>
        <taxon>Spermatophyta</taxon>
        <taxon>Magnoliopsida</taxon>
        <taxon>eudicotyledons</taxon>
        <taxon>Gunneridae</taxon>
        <taxon>Pentapetalae</taxon>
        <taxon>rosids</taxon>
        <taxon>malvids</taxon>
        <taxon>Brassicales</taxon>
        <taxon>Brassicaceae</taxon>
        <taxon>Camelineae</taxon>
        <taxon>Arabidopsis</taxon>
    </lineage>
</organism>